<reference key="1">
    <citation type="submission" date="1999-12" db="EMBL/GenBank/DDBJ databases">
        <title>Arabidopsis thaliana MBP-like genes.</title>
        <authorList>
            <person name="Nziengui-Ikapi H."/>
            <person name="da Silva Conceicao A."/>
            <person name="Marty F."/>
        </authorList>
    </citation>
    <scope>NUCLEOTIDE SEQUENCE [MRNA]</scope>
    <source>
        <strain>cv. Columbia</strain>
    </source>
</reference>
<reference key="2">
    <citation type="journal article" date="2000" name="Nature">
        <title>Sequence and analysis of chromosome 3 of the plant Arabidopsis thaliana.</title>
        <authorList>
            <person name="Salanoubat M."/>
            <person name="Lemcke K."/>
            <person name="Rieger M."/>
            <person name="Ansorge W."/>
            <person name="Unseld M."/>
            <person name="Fartmann B."/>
            <person name="Valle G."/>
            <person name="Bloecker H."/>
            <person name="Perez-Alonso M."/>
            <person name="Obermaier B."/>
            <person name="Delseny M."/>
            <person name="Boutry M."/>
            <person name="Grivell L.A."/>
            <person name="Mache R."/>
            <person name="Puigdomenech P."/>
            <person name="De Simone V."/>
            <person name="Choisne N."/>
            <person name="Artiguenave F."/>
            <person name="Robert C."/>
            <person name="Brottier P."/>
            <person name="Wincker P."/>
            <person name="Cattolico L."/>
            <person name="Weissenbach J."/>
            <person name="Saurin W."/>
            <person name="Quetier F."/>
            <person name="Schaefer M."/>
            <person name="Mueller-Auer S."/>
            <person name="Gabel C."/>
            <person name="Fuchs M."/>
            <person name="Benes V."/>
            <person name="Wurmbach E."/>
            <person name="Drzonek H."/>
            <person name="Erfle H."/>
            <person name="Jordan N."/>
            <person name="Bangert S."/>
            <person name="Wiedelmann R."/>
            <person name="Kranz H."/>
            <person name="Voss H."/>
            <person name="Holland R."/>
            <person name="Brandt P."/>
            <person name="Nyakatura G."/>
            <person name="Vezzi A."/>
            <person name="D'Angelo M."/>
            <person name="Pallavicini A."/>
            <person name="Toppo S."/>
            <person name="Simionati B."/>
            <person name="Conrad A."/>
            <person name="Hornischer K."/>
            <person name="Kauer G."/>
            <person name="Loehnert T.-H."/>
            <person name="Nordsiek G."/>
            <person name="Reichelt J."/>
            <person name="Scharfe M."/>
            <person name="Schoen O."/>
            <person name="Bargues M."/>
            <person name="Terol J."/>
            <person name="Climent J."/>
            <person name="Navarro P."/>
            <person name="Collado C."/>
            <person name="Perez-Perez A."/>
            <person name="Ottenwaelder B."/>
            <person name="Duchemin D."/>
            <person name="Cooke R."/>
            <person name="Laudie M."/>
            <person name="Berger-Llauro C."/>
            <person name="Purnelle B."/>
            <person name="Masuy D."/>
            <person name="de Haan M."/>
            <person name="Maarse A.C."/>
            <person name="Alcaraz J.-P."/>
            <person name="Cottet A."/>
            <person name="Casacuberta E."/>
            <person name="Monfort A."/>
            <person name="Argiriou A."/>
            <person name="Flores M."/>
            <person name="Liguori R."/>
            <person name="Vitale D."/>
            <person name="Mannhaupt G."/>
            <person name="Haase D."/>
            <person name="Schoof H."/>
            <person name="Rudd S."/>
            <person name="Zaccaria P."/>
            <person name="Mewes H.-W."/>
            <person name="Mayer K.F.X."/>
            <person name="Kaul S."/>
            <person name="Town C.D."/>
            <person name="Koo H.L."/>
            <person name="Tallon L.J."/>
            <person name="Jenkins J."/>
            <person name="Rooney T."/>
            <person name="Rizzo M."/>
            <person name="Walts A."/>
            <person name="Utterback T."/>
            <person name="Fujii C.Y."/>
            <person name="Shea T.P."/>
            <person name="Creasy T.H."/>
            <person name="Haas B."/>
            <person name="Maiti R."/>
            <person name="Wu D."/>
            <person name="Peterson J."/>
            <person name="Van Aken S."/>
            <person name="Pai G."/>
            <person name="Militscher J."/>
            <person name="Sellers P."/>
            <person name="Gill J.E."/>
            <person name="Feldblyum T.V."/>
            <person name="Preuss D."/>
            <person name="Lin X."/>
            <person name="Nierman W.C."/>
            <person name="Salzberg S.L."/>
            <person name="White O."/>
            <person name="Venter J.C."/>
            <person name="Fraser C.M."/>
            <person name="Kaneko T."/>
            <person name="Nakamura Y."/>
            <person name="Sato S."/>
            <person name="Kato T."/>
            <person name="Asamizu E."/>
            <person name="Sasamoto S."/>
            <person name="Kimura T."/>
            <person name="Idesawa K."/>
            <person name="Kawashima K."/>
            <person name="Kishida Y."/>
            <person name="Kiyokawa C."/>
            <person name="Kohara M."/>
            <person name="Matsumoto M."/>
            <person name="Matsuno A."/>
            <person name="Muraki A."/>
            <person name="Nakayama S."/>
            <person name="Nakazaki N."/>
            <person name="Shinpo S."/>
            <person name="Takeuchi C."/>
            <person name="Wada T."/>
            <person name="Watanabe A."/>
            <person name="Yamada M."/>
            <person name="Yasuda M."/>
            <person name="Tabata S."/>
        </authorList>
    </citation>
    <scope>NUCLEOTIDE SEQUENCE [LARGE SCALE GENOMIC DNA]</scope>
    <source>
        <strain>cv. Columbia</strain>
    </source>
</reference>
<reference key="3">
    <citation type="journal article" date="2000" name="DNA Res.">
        <title>Structural analysis of Arabidopsis thaliana chromosome 3. II. Sequence features of the 4,251,695 bp regions covered by 90 P1, TAC and BAC clones.</title>
        <authorList>
            <person name="Kaneko T."/>
            <person name="Katoh T."/>
            <person name="Sato S."/>
            <person name="Nakamura Y."/>
            <person name="Asamizu E."/>
            <person name="Tabata S."/>
        </authorList>
    </citation>
    <scope>NUCLEOTIDE SEQUENCE [LARGE SCALE GENOMIC DNA]</scope>
    <source>
        <strain>cv. Columbia</strain>
    </source>
</reference>
<reference key="4">
    <citation type="journal article" date="2017" name="Plant J.">
        <title>Araport11: a complete reannotation of the Arabidopsis thaliana reference genome.</title>
        <authorList>
            <person name="Cheng C.Y."/>
            <person name="Krishnakumar V."/>
            <person name="Chan A.P."/>
            <person name="Thibaud-Nissen F."/>
            <person name="Schobel S."/>
            <person name="Town C.D."/>
        </authorList>
    </citation>
    <scope>GENOME REANNOTATION</scope>
    <source>
        <strain>cv. Columbia</strain>
    </source>
</reference>
<reference key="5">
    <citation type="journal article" date="2003" name="Science">
        <title>Empirical analysis of transcriptional activity in the Arabidopsis genome.</title>
        <authorList>
            <person name="Yamada K."/>
            <person name="Lim J."/>
            <person name="Dale J.M."/>
            <person name="Chen H."/>
            <person name="Shinn P."/>
            <person name="Palm C.J."/>
            <person name="Southwick A.M."/>
            <person name="Wu H.C."/>
            <person name="Kim C.J."/>
            <person name="Nguyen M."/>
            <person name="Pham P.K."/>
            <person name="Cheuk R.F."/>
            <person name="Karlin-Newmann G."/>
            <person name="Liu S.X."/>
            <person name="Lam B."/>
            <person name="Sakano H."/>
            <person name="Wu T."/>
            <person name="Yu G."/>
            <person name="Miranda M."/>
            <person name="Quach H.L."/>
            <person name="Tripp M."/>
            <person name="Chang C.H."/>
            <person name="Lee J.M."/>
            <person name="Toriumi M.J."/>
            <person name="Chan M.M."/>
            <person name="Tang C.C."/>
            <person name="Onodera C.S."/>
            <person name="Deng J.M."/>
            <person name="Akiyama K."/>
            <person name="Ansari Y."/>
            <person name="Arakawa T."/>
            <person name="Banh J."/>
            <person name="Banno F."/>
            <person name="Bowser L."/>
            <person name="Brooks S.Y."/>
            <person name="Carninci P."/>
            <person name="Chao Q."/>
            <person name="Choy N."/>
            <person name="Enju A."/>
            <person name="Goldsmith A.D."/>
            <person name="Gurjal M."/>
            <person name="Hansen N.F."/>
            <person name="Hayashizaki Y."/>
            <person name="Johnson-Hopson C."/>
            <person name="Hsuan V.W."/>
            <person name="Iida K."/>
            <person name="Karnes M."/>
            <person name="Khan S."/>
            <person name="Koesema E."/>
            <person name="Ishida J."/>
            <person name="Jiang P.X."/>
            <person name="Jones T."/>
            <person name="Kawai J."/>
            <person name="Kamiya A."/>
            <person name="Meyers C."/>
            <person name="Nakajima M."/>
            <person name="Narusaka M."/>
            <person name="Seki M."/>
            <person name="Sakurai T."/>
            <person name="Satou M."/>
            <person name="Tamse R."/>
            <person name="Vaysberg M."/>
            <person name="Wallender E.K."/>
            <person name="Wong C."/>
            <person name="Yamamura Y."/>
            <person name="Yuan S."/>
            <person name="Shinozaki K."/>
            <person name="Davis R.W."/>
            <person name="Theologis A."/>
            <person name="Ecker J.R."/>
        </authorList>
    </citation>
    <scope>NUCLEOTIDE SEQUENCE [LARGE SCALE MRNA]</scope>
    <source>
        <strain>cv. Columbia</strain>
    </source>
</reference>
<reference key="6">
    <citation type="submission" date="2006-07" db="EMBL/GenBank/DDBJ databases">
        <title>Large-scale analysis of RIKEN Arabidopsis full-length (RAFL) cDNAs.</title>
        <authorList>
            <person name="Totoki Y."/>
            <person name="Seki M."/>
            <person name="Ishida J."/>
            <person name="Nakajima M."/>
            <person name="Enju A."/>
            <person name="Kamiya A."/>
            <person name="Narusaka M."/>
            <person name="Shin-i T."/>
            <person name="Nakagawa M."/>
            <person name="Sakamoto N."/>
            <person name="Oishi K."/>
            <person name="Kohara Y."/>
            <person name="Kobayashi M."/>
            <person name="Toyoda A."/>
            <person name="Sakaki Y."/>
            <person name="Sakurai T."/>
            <person name="Iida K."/>
            <person name="Akiyama K."/>
            <person name="Satou M."/>
            <person name="Toyoda T."/>
            <person name="Konagaya A."/>
            <person name="Carninci P."/>
            <person name="Kawai J."/>
            <person name="Hayashizaki Y."/>
            <person name="Shinozaki K."/>
        </authorList>
    </citation>
    <scope>NUCLEOTIDE SEQUENCE [LARGE SCALE MRNA]</scope>
    <source>
        <strain>cv. Columbia</strain>
    </source>
</reference>
<reference key="7">
    <citation type="journal article" date="2005" name="Development">
        <title>Genetic and molecular identification of genes required for female gametophyte development and function in Arabidopsis.</title>
        <authorList>
            <person name="Pagnussat G.C."/>
            <person name="Yu H.-J."/>
            <person name="Ngo Q.A."/>
            <person name="Rajani S."/>
            <person name="Mayalagu S."/>
            <person name="Johnson C.S."/>
            <person name="Capron A."/>
            <person name="Xie L.-F."/>
            <person name="Ye D."/>
            <person name="Sundaresan V."/>
        </authorList>
    </citation>
    <scope>FUNCTION</scope>
    <scope>DISRUPTION PHENOTYPE</scope>
</reference>
<reference key="8">
    <citation type="journal article" date="2008" name="Plant Cell Physiol.">
        <title>Antagonistic jacalin-related lectins regulate the size of ER body-type beta-glucosidase complexes in Arabidopsis thaliana.</title>
        <authorList>
            <person name="Nagano A.J."/>
            <person name="Fukao Y."/>
            <person name="Fujiwara M."/>
            <person name="Nishimura M."/>
            <person name="Hara-Nishimura I."/>
        </authorList>
    </citation>
    <scope>GENE FAMILY</scope>
    <scope>NOMENCLATURE</scope>
</reference>
<name>JAL32_ARATH</name>
<feature type="initiator methionine" description="Removed" evidence="1">
    <location>
        <position position="1"/>
    </location>
</feature>
<feature type="chain" id="PRO_0000072796" description="Jacalin-related lectin 32">
    <location>
        <begin position="2"/>
        <end position="300"/>
    </location>
</feature>
<feature type="domain" description="Jacalin-type lectin 1" evidence="2">
    <location>
        <begin position="2"/>
        <end position="146"/>
    </location>
</feature>
<feature type="domain" description="Jacalin-type lectin 2" evidence="2">
    <location>
        <begin position="154"/>
        <end position="297"/>
    </location>
</feature>
<feature type="modified residue" description="N-acetylalanine" evidence="1">
    <location>
        <position position="2"/>
    </location>
</feature>
<comment type="function">
    <text evidence="3">Involved in gametophytic development.</text>
</comment>
<comment type="disruption phenotype">
    <text evidence="3">Defects in female gametophyte development. Arrested during endosperm development.</text>
</comment>
<comment type="similarity">
    <text evidence="2 4">Belongs to the jacalin lectin family.</text>
</comment>
<protein>
    <recommendedName>
        <fullName>Jacalin-related lectin 32</fullName>
    </recommendedName>
    <alternativeName>
        <fullName>Myrosinase-binding protein-like At3g16440</fullName>
    </alternativeName>
    <alternativeName>
        <fullName>Myrosinase-binding protein-like protein-300B</fullName>
    </alternativeName>
    <alternativeName>
        <fullName>Protein MATERNAL EFFECT EMBRYO ARREST 36</fullName>
    </alternativeName>
</protein>
<keyword id="KW-0007">Acetylation</keyword>
<keyword id="KW-0217">Developmental protein</keyword>
<keyword id="KW-0430">Lectin</keyword>
<keyword id="KW-1185">Reference proteome</keyword>
<keyword id="KW-0677">Repeat</keyword>
<gene>
    <name type="primary">JAL32</name>
    <name type="synonym">MEE36</name>
    <name type="synonym">MLP-300B</name>
    <name type="ordered locus">At3g16440</name>
    <name type="ORF">MDC8.7</name>
    <name type="ORF">T02O04.6</name>
</gene>
<sequence length="300" mass="32344">MAQKVEAQGGIGGDVWDDGAHDGVRKVHVGQGLDGVSFINVVYENGSQEVVGGEHGKKSLIGIETFEVDADDYIVAVQVTYDKIFGYDSDIITSITFSTFKGKTSPPYGLDTENKFVLKEKNGGKLVGFHGRAGEILYALGAYFTTTTTPLTPAKKLPAVGGDEGTAWDDGAFDGVKKVYIGQAQDGISAVKFVYDKGAEDIVGDEHGNDTLLGFEEFQLDYPSEYITAVEGTYDKIFGFETEVINMLRFKTNKKTSPPFGIEAGTAFELKEEGCKIVGFHGKVSAVLHQFGVHILPVTN</sequence>
<evidence type="ECO:0000250" key="1">
    <source>
        <dbReference type="UniProtKB" id="Q9FGC5"/>
    </source>
</evidence>
<evidence type="ECO:0000255" key="2">
    <source>
        <dbReference type="PROSITE-ProRule" id="PRU01088"/>
    </source>
</evidence>
<evidence type="ECO:0000269" key="3">
    <source>
    </source>
</evidence>
<evidence type="ECO:0000305" key="4"/>
<accession>O04312</accession>
<accession>Q0WTT8</accession>
<proteinExistence type="evidence at transcript level"/>
<dbReference type="EMBL" id="AF214573">
    <property type="protein sequence ID" value="AAF25384.1"/>
    <property type="molecule type" value="mRNA"/>
</dbReference>
<dbReference type="EMBL" id="AC001645">
    <property type="protein sequence ID" value="AAB63633.1"/>
    <property type="molecule type" value="Genomic_DNA"/>
</dbReference>
<dbReference type="EMBL" id="AP000373">
    <property type="protein sequence ID" value="BAB01143.1"/>
    <property type="molecule type" value="Genomic_DNA"/>
</dbReference>
<dbReference type="EMBL" id="CP002686">
    <property type="protein sequence ID" value="AEE75816.1"/>
    <property type="molecule type" value="Genomic_DNA"/>
</dbReference>
<dbReference type="EMBL" id="BT005992">
    <property type="protein sequence ID" value="AAO64927.1"/>
    <property type="molecule type" value="mRNA"/>
</dbReference>
<dbReference type="EMBL" id="AK227457">
    <property type="protein sequence ID" value="BAE99460.1"/>
    <property type="molecule type" value="mRNA"/>
</dbReference>
<dbReference type="RefSeq" id="NP_188265.1">
    <property type="nucleotide sequence ID" value="NM_112515.5"/>
</dbReference>
<dbReference type="SMR" id="O04312"/>
<dbReference type="BioGRID" id="6226">
    <property type="interactions" value="2"/>
</dbReference>
<dbReference type="FunCoup" id="O04312">
    <property type="interactions" value="24"/>
</dbReference>
<dbReference type="IntAct" id="O04312">
    <property type="interactions" value="2"/>
</dbReference>
<dbReference type="STRING" id="3702.O04312"/>
<dbReference type="PaxDb" id="3702-AT3G16440.1"/>
<dbReference type="ProteomicsDB" id="250662"/>
<dbReference type="EnsemblPlants" id="AT3G16440.1">
    <property type="protein sequence ID" value="AT3G16440.1"/>
    <property type="gene ID" value="AT3G16440"/>
</dbReference>
<dbReference type="GeneID" id="820892"/>
<dbReference type="Gramene" id="AT3G16440.1">
    <property type="protein sequence ID" value="AT3G16440.1"/>
    <property type="gene ID" value="AT3G16440"/>
</dbReference>
<dbReference type="KEGG" id="ath:AT3G16440"/>
<dbReference type="Araport" id="AT3G16440"/>
<dbReference type="TAIR" id="AT3G16440">
    <property type="gene designation" value="MLP-300B"/>
</dbReference>
<dbReference type="HOGENOM" id="CLU_019384_1_0_1"/>
<dbReference type="InParanoid" id="O04312"/>
<dbReference type="OMA" id="KQWRSHT"/>
<dbReference type="PhylomeDB" id="O04312"/>
<dbReference type="PRO" id="PR:O04312"/>
<dbReference type="Proteomes" id="UP000006548">
    <property type="component" value="Chromosome 3"/>
</dbReference>
<dbReference type="ExpressionAtlas" id="O04312">
    <property type="expression patterns" value="baseline and differential"/>
</dbReference>
<dbReference type="GO" id="GO:0030246">
    <property type="term" value="F:carbohydrate binding"/>
    <property type="evidence" value="ECO:0007669"/>
    <property type="project" value="UniProtKB-KW"/>
</dbReference>
<dbReference type="GO" id="GO:0009793">
    <property type="term" value="P:embryo development ending in seed dormancy"/>
    <property type="evidence" value="ECO:0000315"/>
    <property type="project" value="TAIR"/>
</dbReference>
<dbReference type="CDD" id="cd09612">
    <property type="entry name" value="Jacalin"/>
    <property type="match status" value="2"/>
</dbReference>
<dbReference type="FunFam" id="2.100.10.30:FF:000001">
    <property type="entry name" value="Jacalin-related lectin 33"/>
    <property type="match status" value="2"/>
</dbReference>
<dbReference type="Gene3D" id="2.100.10.30">
    <property type="entry name" value="Jacalin-like lectin domain"/>
    <property type="match status" value="2"/>
</dbReference>
<dbReference type="InterPro" id="IPR001229">
    <property type="entry name" value="Jacalin-like_lectin_dom"/>
</dbReference>
<dbReference type="InterPro" id="IPR033734">
    <property type="entry name" value="Jacalin-like_lectin_dom_plant"/>
</dbReference>
<dbReference type="InterPro" id="IPR036404">
    <property type="entry name" value="Jacalin-like_lectin_dom_sf"/>
</dbReference>
<dbReference type="PANTHER" id="PTHR47293:SF66">
    <property type="entry name" value="JACALIN-RELATED LECTIN 11-RELATED"/>
    <property type="match status" value="1"/>
</dbReference>
<dbReference type="PANTHER" id="PTHR47293">
    <property type="entry name" value="JACALIN-RELATED LECTIN 3"/>
    <property type="match status" value="1"/>
</dbReference>
<dbReference type="Pfam" id="PF01419">
    <property type="entry name" value="Jacalin"/>
    <property type="match status" value="2"/>
</dbReference>
<dbReference type="SMART" id="SM00915">
    <property type="entry name" value="Jacalin"/>
    <property type="match status" value="2"/>
</dbReference>
<dbReference type="SUPFAM" id="SSF51101">
    <property type="entry name" value="Mannose-binding lectins"/>
    <property type="match status" value="2"/>
</dbReference>
<dbReference type="PROSITE" id="PS51752">
    <property type="entry name" value="JACALIN_LECTIN"/>
    <property type="match status" value="2"/>
</dbReference>
<organism>
    <name type="scientific">Arabidopsis thaliana</name>
    <name type="common">Mouse-ear cress</name>
    <dbReference type="NCBI Taxonomy" id="3702"/>
    <lineage>
        <taxon>Eukaryota</taxon>
        <taxon>Viridiplantae</taxon>
        <taxon>Streptophyta</taxon>
        <taxon>Embryophyta</taxon>
        <taxon>Tracheophyta</taxon>
        <taxon>Spermatophyta</taxon>
        <taxon>Magnoliopsida</taxon>
        <taxon>eudicotyledons</taxon>
        <taxon>Gunneridae</taxon>
        <taxon>Pentapetalae</taxon>
        <taxon>rosids</taxon>
        <taxon>malvids</taxon>
        <taxon>Brassicales</taxon>
        <taxon>Brassicaceae</taxon>
        <taxon>Camelineae</taxon>
        <taxon>Arabidopsis</taxon>
    </lineage>
</organism>